<proteinExistence type="inferred from homology"/>
<gene>
    <name evidence="1" type="primary">rlmL</name>
    <name type="ordered locus">SG1020</name>
</gene>
<comment type="function">
    <text evidence="1">Specifically methylates the guanine in position 2445 (m2G2445) and the guanine in position 2069 (m7G2069) of 23S rRNA.</text>
</comment>
<comment type="catalytic activity">
    <reaction evidence="1">
        <text>guanosine(2445) in 23S rRNA + S-adenosyl-L-methionine = N(2)-methylguanosine(2445) in 23S rRNA + S-adenosyl-L-homocysteine + H(+)</text>
        <dbReference type="Rhea" id="RHEA:42740"/>
        <dbReference type="Rhea" id="RHEA-COMP:10215"/>
        <dbReference type="Rhea" id="RHEA-COMP:10216"/>
        <dbReference type="ChEBI" id="CHEBI:15378"/>
        <dbReference type="ChEBI" id="CHEBI:57856"/>
        <dbReference type="ChEBI" id="CHEBI:59789"/>
        <dbReference type="ChEBI" id="CHEBI:74269"/>
        <dbReference type="ChEBI" id="CHEBI:74481"/>
        <dbReference type="EC" id="2.1.1.173"/>
    </reaction>
</comment>
<comment type="catalytic activity">
    <reaction evidence="1">
        <text>guanosine(2069) in 23S rRNA + S-adenosyl-L-methionine = N(2)-methylguanosine(2069) in 23S rRNA + S-adenosyl-L-homocysteine + H(+)</text>
        <dbReference type="Rhea" id="RHEA:43772"/>
        <dbReference type="Rhea" id="RHEA-COMP:10688"/>
        <dbReference type="Rhea" id="RHEA-COMP:10689"/>
        <dbReference type="ChEBI" id="CHEBI:15378"/>
        <dbReference type="ChEBI" id="CHEBI:57856"/>
        <dbReference type="ChEBI" id="CHEBI:59789"/>
        <dbReference type="ChEBI" id="CHEBI:74269"/>
        <dbReference type="ChEBI" id="CHEBI:74481"/>
        <dbReference type="EC" id="2.1.1.264"/>
    </reaction>
</comment>
<comment type="subcellular location">
    <subcellularLocation>
        <location evidence="1">Cytoplasm</location>
    </subcellularLocation>
</comment>
<comment type="similarity">
    <text evidence="1">Belongs to the methyltransferase superfamily. RlmKL family.</text>
</comment>
<feature type="chain" id="PRO_0000366842" description="Ribosomal RNA large subunit methyltransferase K/L">
    <location>
        <begin position="1"/>
        <end position="713"/>
    </location>
</feature>
<feature type="domain" description="THUMP" evidence="1">
    <location>
        <begin position="43"/>
        <end position="154"/>
    </location>
</feature>
<organism>
    <name type="scientific">Sodalis glossinidius (strain morsitans)</name>
    <dbReference type="NCBI Taxonomy" id="343509"/>
    <lineage>
        <taxon>Bacteria</taxon>
        <taxon>Pseudomonadati</taxon>
        <taxon>Pseudomonadota</taxon>
        <taxon>Gammaproteobacteria</taxon>
        <taxon>Enterobacterales</taxon>
        <taxon>Bruguierivoracaceae</taxon>
        <taxon>Sodalis</taxon>
    </lineage>
</organism>
<sequence>MNSLFATTAQGLEELLRSELETLGAASCKVALGGVHFQADSRLLYRALLWSRLASRIVLPLNVFSVGSDGDLYRGVQAVDWPSLFTVDKRFAVYFSGTNAAIRNSQYGALKVKDAIVDSFTRHGARRPDVDRQQPDIRIQAYLHRDQVMLSLDLSGSSLHQRGYRGAAGQAPLKENLAVAIVLRSGWKPGTPLLDPMCGSGTLLIEAAMIAADCAPGLTRPYWGFSAWSGHDEAQWQESLDEARARTQTGLAQTSSRFYGFDIDGRVLEKARHNARRAGVAALITFQTGEVAQLINPLPEGQRGTVVSNPPYGERLESEPALIALHNQLGRVMKSQFGGWRLSLFSASPALLGALMLRAERSFSAKNGPLDCEQKNYLLAETATAPGSVEGQIATDFANRLRKNVRSLQKWVEREKLDCYRLYDADLPEYNVAIDRYSSWVVIQEYVAPKSVDPERARQRLYDVINATLAVLAIPASRLVVKARERQKGKSQYEKLAQKGEFLLVEEYGAKLWVNLTDYLDTGLFIDHRIARRMLGEMSRGKDFLNLFAYTGSASVHAGIGGACSTTSVDMSRTYLEWAEKNLRSNGLVGRQHRLIQADCLAWLAMAQETFDVIFIDPPTFSNSKRMADTFDVQRDHLALMAQLKRLLRPGGTLMFSNNKRGFQLDEAGLAALGLRAQSITDRTRSPDFAHNRQIHLCWLISHADKDTFKSCH</sequence>
<protein>
    <recommendedName>
        <fullName evidence="1">Ribosomal RNA large subunit methyltransferase K/L</fullName>
    </recommendedName>
    <domain>
        <recommendedName>
            <fullName evidence="1">23S rRNA m2G2445 methyltransferase</fullName>
            <ecNumber evidence="1">2.1.1.173</ecNumber>
        </recommendedName>
        <alternativeName>
            <fullName evidence="1">rRNA (guanine-N(2)-)-methyltransferase RlmL</fullName>
        </alternativeName>
    </domain>
    <domain>
        <recommendedName>
            <fullName evidence="1">23S rRNA m7G2069 methyltransferase</fullName>
            <ecNumber evidence="1">2.1.1.264</ecNumber>
        </recommendedName>
        <alternativeName>
            <fullName evidence="1">rRNA (guanine-N(7)-)-methyltransferase RlmK</fullName>
        </alternativeName>
    </domain>
</protein>
<keyword id="KW-0963">Cytoplasm</keyword>
<keyword id="KW-0489">Methyltransferase</keyword>
<keyword id="KW-0694">RNA-binding</keyword>
<keyword id="KW-0698">rRNA processing</keyword>
<keyword id="KW-0949">S-adenosyl-L-methionine</keyword>
<keyword id="KW-0808">Transferase</keyword>
<dbReference type="EC" id="2.1.1.173" evidence="1"/>
<dbReference type="EC" id="2.1.1.264" evidence="1"/>
<dbReference type="EMBL" id="AP008232">
    <property type="protein sequence ID" value="BAE74295.1"/>
    <property type="molecule type" value="Genomic_DNA"/>
</dbReference>
<dbReference type="RefSeq" id="WP_011410880.1">
    <property type="nucleotide sequence ID" value="NC_007712.1"/>
</dbReference>
<dbReference type="SMR" id="Q2NU80"/>
<dbReference type="STRING" id="343509.SG1020"/>
<dbReference type="KEGG" id="sgl:SG1020"/>
<dbReference type="eggNOG" id="COG0116">
    <property type="taxonomic scope" value="Bacteria"/>
</dbReference>
<dbReference type="eggNOG" id="COG1092">
    <property type="taxonomic scope" value="Bacteria"/>
</dbReference>
<dbReference type="HOGENOM" id="CLU_014042_2_0_6"/>
<dbReference type="OrthoDB" id="9809404at2"/>
<dbReference type="Proteomes" id="UP000001932">
    <property type="component" value="Chromosome"/>
</dbReference>
<dbReference type="GO" id="GO:0005737">
    <property type="term" value="C:cytoplasm"/>
    <property type="evidence" value="ECO:0007669"/>
    <property type="project" value="UniProtKB-SubCell"/>
</dbReference>
<dbReference type="GO" id="GO:0052915">
    <property type="term" value="F:23S rRNA (guanine(2445)-N(2))-methyltransferase activity"/>
    <property type="evidence" value="ECO:0007669"/>
    <property type="project" value="UniProtKB-UniRule"/>
</dbReference>
<dbReference type="GO" id="GO:0003723">
    <property type="term" value="F:RNA binding"/>
    <property type="evidence" value="ECO:0007669"/>
    <property type="project" value="UniProtKB-KW"/>
</dbReference>
<dbReference type="GO" id="GO:0070043">
    <property type="term" value="F:rRNA (guanine-N7-)-methyltransferase activity"/>
    <property type="evidence" value="ECO:0007669"/>
    <property type="project" value="UniProtKB-UniRule"/>
</dbReference>
<dbReference type="CDD" id="cd02440">
    <property type="entry name" value="AdoMet_MTases"/>
    <property type="match status" value="1"/>
</dbReference>
<dbReference type="CDD" id="cd11715">
    <property type="entry name" value="THUMP_AdoMetMT"/>
    <property type="match status" value="1"/>
</dbReference>
<dbReference type="FunFam" id="3.40.50.150:FF:000039">
    <property type="entry name" value="Ribosomal RNA large subunit methyltransferase K/L"/>
    <property type="match status" value="1"/>
</dbReference>
<dbReference type="Gene3D" id="3.30.2130.30">
    <property type="match status" value="1"/>
</dbReference>
<dbReference type="Gene3D" id="3.30.750.80">
    <property type="entry name" value="RNA methyltransferase domain (HRMD) like"/>
    <property type="match status" value="1"/>
</dbReference>
<dbReference type="Gene3D" id="3.40.50.150">
    <property type="entry name" value="Vaccinia Virus protein VP39"/>
    <property type="match status" value="2"/>
</dbReference>
<dbReference type="HAMAP" id="MF_01858">
    <property type="entry name" value="23SrRNA_methyltr_KL"/>
    <property type="match status" value="1"/>
</dbReference>
<dbReference type="InterPro" id="IPR017244">
    <property type="entry name" value="23SrRNA_methyltr_KL"/>
</dbReference>
<dbReference type="InterPro" id="IPR002052">
    <property type="entry name" value="DNA_methylase_N6_adenine_CS"/>
</dbReference>
<dbReference type="InterPro" id="IPR000241">
    <property type="entry name" value="RlmKL-like_Mtase"/>
</dbReference>
<dbReference type="InterPro" id="IPR053943">
    <property type="entry name" value="RlmKL-like_Mtase_CS"/>
</dbReference>
<dbReference type="InterPro" id="IPR054170">
    <property type="entry name" value="RlmL_1st"/>
</dbReference>
<dbReference type="InterPro" id="IPR019614">
    <property type="entry name" value="SAM-dep_methyl-trfase"/>
</dbReference>
<dbReference type="InterPro" id="IPR029063">
    <property type="entry name" value="SAM-dependent_MTases_sf"/>
</dbReference>
<dbReference type="InterPro" id="IPR004114">
    <property type="entry name" value="THUMP_dom"/>
</dbReference>
<dbReference type="NCBIfam" id="NF008748">
    <property type="entry name" value="PRK11783.1"/>
    <property type="match status" value="1"/>
</dbReference>
<dbReference type="PANTHER" id="PTHR47313">
    <property type="entry name" value="RIBOSOMAL RNA LARGE SUBUNIT METHYLTRANSFERASE K/L"/>
    <property type="match status" value="1"/>
</dbReference>
<dbReference type="PANTHER" id="PTHR47313:SF1">
    <property type="entry name" value="RIBOSOMAL RNA LARGE SUBUNIT METHYLTRANSFERASE K_L"/>
    <property type="match status" value="1"/>
</dbReference>
<dbReference type="Pfam" id="PF10672">
    <property type="entry name" value="Methyltrans_SAM"/>
    <property type="match status" value="1"/>
</dbReference>
<dbReference type="Pfam" id="PF22020">
    <property type="entry name" value="RlmL_1st"/>
    <property type="match status" value="1"/>
</dbReference>
<dbReference type="Pfam" id="PF02926">
    <property type="entry name" value="THUMP"/>
    <property type="match status" value="1"/>
</dbReference>
<dbReference type="Pfam" id="PF01170">
    <property type="entry name" value="UPF0020"/>
    <property type="match status" value="1"/>
</dbReference>
<dbReference type="PIRSF" id="PIRSF037618">
    <property type="entry name" value="RNA_Mtase_bacteria_prd"/>
    <property type="match status" value="1"/>
</dbReference>
<dbReference type="SMART" id="SM00981">
    <property type="entry name" value="THUMP"/>
    <property type="match status" value="1"/>
</dbReference>
<dbReference type="SUPFAM" id="SSF53335">
    <property type="entry name" value="S-adenosyl-L-methionine-dependent methyltransferases"/>
    <property type="match status" value="2"/>
</dbReference>
<dbReference type="PROSITE" id="PS51165">
    <property type="entry name" value="THUMP"/>
    <property type="match status" value="1"/>
</dbReference>
<dbReference type="PROSITE" id="PS01261">
    <property type="entry name" value="UPF0020"/>
    <property type="match status" value="1"/>
</dbReference>
<reference key="1">
    <citation type="journal article" date="2006" name="Genome Res.">
        <title>Massive genome erosion and functional adaptations provide insights into the symbiotic lifestyle of Sodalis glossinidius in the tsetse host.</title>
        <authorList>
            <person name="Toh H."/>
            <person name="Weiss B.L."/>
            <person name="Perkin S.A.H."/>
            <person name="Yamashita A."/>
            <person name="Oshima K."/>
            <person name="Hattori M."/>
            <person name="Aksoy S."/>
        </authorList>
    </citation>
    <scope>NUCLEOTIDE SEQUENCE [LARGE SCALE GENOMIC DNA]</scope>
    <source>
        <strain>morsitans</strain>
    </source>
</reference>
<name>RLMKL_SODGM</name>
<evidence type="ECO:0000255" key="1">
    <source>
        <dbReference type="HAMAP-Rule" id="MF_01858"/>
    </source>
</evidence>
<accession>Q2NU80</accession>